<sequence>MCFFLGSRLAYAENIDGSSTISNRDISGSLNIGINKDANIDINGTVNIKDYFSVATCNGQSSTCPEGGLNASAKIDKSASVGASVTIVGDSSKGELNIDGGSTLYTQQLWVSGNDNDKTSNVSDDSNGSLSINNGSNVFVVSSQDDTPFKTNSVKWNQNIISQGNNITDGTVSSGDLVLGKTGNGIIDIDNNSKLDVKNDVVVSTGVDGIPNEKPSEINIKNESNFSVHGDMKGGISAAGKLNLNMDNSSNLHVDKNIAVGIGRESNITVSASRESSIFSDGNFTVATGNNSNANLKLDASNLSVNGVSTIGSGDGSITKFDIKNGSVVTSSSDMTLAKGKGTQANINISSSELNTGSLSVGEGDNADVKMTGSGASVSSKKTFTVAKGNNASATLNYTGSKIDIGSGYIGEGESAKTQLELNNSALTASGKVFIGQGNTTQTNLTLNDKSSVNVSGEMSVAQGSSASVDVTATNAVLSADSLSLGGGEAAKVTMTGSGATVSSKNTFTVAKGNNASATLDYTDSKIDIGSGYIGEGEAAKTQLELNNSALTASGKVFIGQGNTTQTNLTLNDKSSVNVSDEMSVAQGSSASVDVTITNAVLSADSLSLGGGEAAKVTMTGNRATISSGNTFTVAKGNNASATLDYSDSKINIGNGYIGGGEKAQTVLTLKDSALAATGDVIMGQGQETQTDLTLSPQSSIKVSGNMSIAQGNAASAKVIVDNADLSANSMSIGEGDTAAVTMTGNGATISSGNTFTVARGNNASATLDYSDSKINIGNGYIGGGEKAQTVLTLKDSALAATGDVIMGQGQETQTDLTLSPQSSIKVSGNMSIAQGNAASAKVIVDNADLSANSMSIGEGDTAAVTMTGNGATISSGNTFTVARGNNASATLDYSDSKINIGNGYIGVGEKSHTLLKLDNSTFHAAGNIDIGKGSSTIANVSVGAGSNMSIKGNASIGVGDQAKAKFSVKDSVLNIGSSLVLGQGNSTEAEMSVEHSQLYSGGLLLGTANNAVVSMSANNSEISVVGDYTVAKGDGSEATLIYKNSDINLGNGILGAGSGVKTDLSLDNSKFVASDGIIIGKGDNAITNLSISDHSVFKGERINIGNGSYSKNSISITGNSIFDFGSSQESTIGEGDYSQSLVTINDASVYGDGSLTLAKGNNSFAVLNLQDNAVTNANNISLATGLGSKAIVNVSNMNSGQFNPVSMGAGDGYAEVNFDGVNGYTLSTNFICMDSGSCADTVINVNRGTVSLSGTNDWKGQINVYDGTRLDARGNDAVDGILNVSKEAQVDFNGYSQHMTGIDNKGMIYLSDGSASSDVYLDKDYVAHDGSGVQFGIFGQKEADVMHVKGDTSGSSGIVVTTNSKNKIKKGGDILLVEVNGDSSGSFYLNSLIKNGKEYKVTGDYIDVGAWEYALNKKRKNWYLSVDMRPEPGAFINNSKSMLDMFALQRYDIPGQHRYPTLFENLYNNGMWIQFNNNSGSNSEVYDNLKTSYSLNTMMIGGDIYNWTDGYNYSHIGIMGGMGSAANKTTSTNNKRATGNVDGYTLGLYHVFQQNISDGLNESERQGLWTYSSIQYMDYDNSVSSTNNFKANYGVNGFRLTGEVGYLKNIGGIQPSDFYVEPKLYLSHTELSGGVVEDLQGGKITYPNSLTIIEPGVFFSYRKTHESTSNDEAMFKDYIKQSVVDAWFGGGYSFKTGNYSRTNFDSDMVEYNTSDNFALKSGVEFEFLKDARLLLTSSYSINNDRNLSFILGGNYYF</sequence>
<proteinExistence type="inferred from homology"/>
<reference key="1">
    <citation type="submission" date="2000-04" db="EMBL/GenBank/DDBJ databases">
        <title>Complete nucleotide sequence of the F plasmid: its implications for organization and diversification of plasmid genomes.</title>
        <authorList>
            <person name="Shimizu H."/>
            <person name="Saitoh Y."/>
            <person name="Suda Y."/>
            <person name="Uehara K."/>
            <person name="Sampei G."/>
            <person name="Mizobuchi K."/>
        </authorList>
    </citation>
    <scope>NUCLEOTIDE SEQUENCE [LARGE SCALE GENOMIC DNA]</scope>
    <source>
        <strain>K12 / CR63</strain>
    </source>
</reference>
<organism>
    <name type="scientific">Escherichia coli (strain K12)</name>
    <dbReference type="NCBI Taxonomy" id="83333"/>
    <lineage>
        <taxon>Bacteria</taxon>
        <taxon>Pseudomonadati</taxon>
        <taxon>Pseudomonadota</taxon>
        <taxon>Gammaproteobacteria</taxon>
        <taxon>Enterobacterales</taxon>
        <taxon>Enterobacteriaceae</taxon>
        <taxon>Escherichia</taxon>
    </lineage>
</organism>
<keyword id="KW-0998">Cell outer membrane</keyword>
<keyword id="KW-0472">Membrane</keyword>
<keyword id="KW-0614">Plasmid</keyword>
<keyword id="KW-0732">Signal</keyword>
<keyword id="KW-0812">Transmembrane</keyword>
<keyword id="KW-1134">Transmembrane beta strand</keyword>
<accession>Q9JMS5</accession>
<feature type="signal peptide" evidence="1">
    <location>
        <begin position="1"/>
        <end position="12"/>
    </location>
</feature>
<feature type="chain" id="PRO_0000268021" description="Uncharacterized protein YuaO">
    <location>
        <begin position="13"/>
        <end position="1758"/>
    </location>
</feature>
<feature type="domain" description="Autotransporter" evidence="2">
    <location>
        <begin position="1465"/>
        <end position="1758"/>
    </location>
</feature>
<protein>
    <recommendedName>
        <fullName>Uncharacterized protein YuaO</fullName>
    </recommendedName>
</protein>
<comment type="subcellular location">
    <subcellularLocation>
        <location evidence="3">Cell outer membrane</location>
        <topology evidence="3">Peripheral membrane protein</topology>
    </subcellularLocation>
</comment>
<name>YUAO_ECOLI</name>
<gene>
    <name type="primary">yuaO</name>
    <name type="synonym">ycbB</name>
    <name type="ordered locus">ECOK12F026</name>
</gene>
<geneLocation type="plasmid">
    <name>F</name>
</geneLocation>
<dbReference type="EMBL" id="AP001918">
    <property type="protein sequence ID" value="BAA97896.1"/>
    <property type="molecule type" value="Genomic_DNA"/>
</dbReference>
<dbReference type="RefSeq" id="NP_061405.1">
    <property type="nucleotide sequence ID" value="NC_002483.1"/>
</dbReference>
<dbReference type="SMR" id="Q9JMS5"/>
<dbReference type="TCDB" id="1.B.12.1.4">
    <property type="family name" value="the autotransporter-1 (at-1) family"/>
</dbReference>
<dbReference type="PhylomeDB" id="Q9JMS5"/>
<dbReference type="GO" id="GO:0009279">
    <property type="term" value="C:cell outer membrane"/>
    <property type="evidence" value="ECO:0007669"/>
    <property type="project" value="UniProtKB-SubCell"/>
</dbReference>
<dbReference type="Gene3D" id="2.160.20.20">
    <property type="match status" value="1"/>
</dbReference>
<dbReference type="Gene3D" id="2.40.128.130">
    <property type="entry name" value="Autotransporter beta-domain"/>
    <property type="match status" value="1"/>
</dbReference>
<dbReference type="InterPro" id="IPR005546">
    <property type="entry name" value="Autotransporte_beta"/>
</dbReference>
<dbReference type="InterPro" id="IPR036709">
    <property type="entry name" value="Autotransporte_beta_dom_sf"/>
</dbReference>
<dbReference type="InterPro" id="IPR012332">
    <property type="entry name" value="Autotransporter_pectin_lyase_C"/>
</dbReference>
<dbReference type="InterPro" id="IPR006315">
    <property type="entry name" value="OM_autotransptr_brl_dom"/>
</dbReference>
<dbReference type="InterPro" id="IPR011050">
    <property type="entry name" value="Pectin_lyase_fold/virulence"/>
</dbReference>
<dbReference type="NCBIfam" id="TIGR01414">
    <property type="entry name" value="autotrans_barl"/>
    <property type="match status" value="1"/>
</dbReference>
<dbReference type="SMART" id="SM00869">
    <property type="entry name" value="Autotransporter"/>
    <property type="match status" value="1"/>
</dbReference>
<dbReference type="SUPFAM" id="SSF103515">
    <property type="entry name" value="Autotransporter"/>
    <property type="match status" value="1"/>
</dbReference>
<dbReference type="SUPFAM" id="SSF51126">
    <property type="entry name" value="Pectin lyase-like"/>
    <property type="match status" value="1"/>
</dbReference>
<dbReference type="PROSITE" id="PS51208">
    <property type="entry name" value="AUTOTRANSPORTER"/>
    <property type="match status" value="1"/>
</dbReference>
<evidence type="ECO:0000255" key="1"/>
<evidence type="ECO:0000255" key="2">
    <source>
        <dbReference type="PROSITE-ProRule" id="PRU00556"/>
    </source>
</evidence>
<evidence type="ECO:0000305" key="3"/>